<protein>
    <recommendedName>
        <fullName evidence="2">Septenin 1b</fullName>
    </recommendedName>
</protein>
<keyword id="KW-0903">Direct protein sequencing</keyword>
<keyword id="KW-0964">Secreted</keyword>
<dbReference type="GO" id="GO:0005576">
    <property type="term" value="C:extracellular region"/>
    <property type="evidence" value="ECO:0007669"/>
    <property type="project" value="UniProtKB-SubCell"/>
</dbReference>
<reference key="1">
    <citation type="journal article" date="2021" name="Rapid Commun. Mass Spectrom.">
        <title>Manual mass spectrometry de novo sequencing of the anionic host defense peptides of the Cuban Treefrog Osteopilus septentrionalis.</title>
        <authorList>
            <person name="Samgina T.Y."/>
            <person name="Tolpina M.D."/>
            <person name="Surin A.K."/>
            <person name="Kovalev S.V."/>
            <person name="Bosch R.A."/>
            <person name="Alonso I.P."/>
            <person name="Garcia F.A."/>
            <person name="Gonzalez Lopez L.J."/>
            <person name="Lebedev A.T."/>
        </authorList>
    </citation>
    <scope>PROTEIN SEQUENCE</scope>
    <scope>MASS SPECTROMETRY</scope>
</reference>
<organism>
    <name type="scientific">Osteopilus septentrionalis</name>
    <name type="common">Cuban treefrog</name>
    <dbReference type="NCBI Taxonomy" id="317373"/>
    <lineage>
        <taxon>Eukaryota</taxon>
        <taxon>Metazoa</taxon>
        <taxon>Chordata</taxon>
        <taxon>Craniata</taxon>
        <taxon>Vertebrata</taxon>
        <taxon>Euteleostomi</taxon>
        <taxon>Amphibia</taxon>
        <taxon>Batrachia</taxon>
        <taxon>Anura</taxon>
        <taxon>Neobatrachia</taxon>
        <taxon>Hyloidea</taxon>
        <taxon>Hylidae</taxon>
        <taxon>Hylinae</taxon>
        <taxon>Lophiohylini</taxon>
        <taxon>Osteopilus</taxon>
    </lineage>
</organism>
<sequence>SDAVANGVHAISGVVDS</sequence>
<feature type="chain" id="PRO_0000453936" description="Septenin 1b">
    <location>
        <begin position="1"/>
        <end position="17"/>
    </location>
</feature>
<feature type="unsure residue" description="L or I" evidence="1">
    <location>
        <position position="11"/>
    </location>
</feature>
<proteinExistence type="evidence at protein level"/>
<name>SEP1B_OSTSE</name>
<comment type="function">
    <text evidence="2">May act as an antimicrobial peptide.</text>
</comment>
<comment type="subcellular location">
    <subcellularLocation>
        <location evidence="1">Secreted</location>
    </subcellularLocation>
</comment>
<comment type="tissue specificity">
    <text evidence="4">Expressed in skin glands.</text>
</comment>
<comment type="mass spectrometry"/>
<comment type="similarity">
    <text evidence="3">Belongs to the Frog skin active peptide (FSAP) family. Septenin subfamily.</text>
</comment>
<evidence type="ECO:0000269" key="1">
    <source>
    </source>
</evidence>
<evidence type="ECO:0000303" key="2">
    <source>
    </source>
</evidence>
<evidence type="ECO:0000305" key="3"/>
<evidence type="ECO:0000305" key="4">
    <source>
    </source>
</evidence>
<accession>C0HLW3</accession>